<reference key="1">
    <citation type="journal article" date="1997" name="Science">
        <title>The complete genome sequence of Escherichia coli K-12.</title>
        <authorList>
            <person name="Blattner F.R."/>
            <person name="Plunkett G. III"/>
            <person name="Bloch C.A."/>
            <person name="Perna N.T."/>
            <person name="Burland V."/>
            <person name="Riley M."/>
            <person name="Collado-Vides J."/>
            <person name="Glasner J.D."/>
            <person name="Rode C.K."/>
            <person name="Mayhew G.F."/>
            <person name="Gregor J."/>
            <person name="Davis N.W."/>
            <person name="Kirkpatrick H.A."/>
            <person name="Goeden M.A."/>
            <person name="Rose D.J."/>
            <person name="Mau B."/>
            <person name="Shao Y."/>
        </authorList>
    </citation>
    <scope>NUCLEOTIDE SEQUENCE [LARGE SCALE GENOMIC DNA]</scope>
    <source>
        <strain>K12 / MG1655 / ATCC 47076</strain>
    </source>
</reference>
<reference key="2">
    <citation type="journal article" date="2018" name="Proteomics">
        <title>Identifying new small proteins in Escherichia coli.</title>
        <authorList>
            <person name="VanOrsdel C.E."/>
            <person name="Kelly J.P."/>
            <person name="Burke B.N."/>
            <person name="Lein C.D."/>
            <person name="Oufiero C.E."/>
            <person name="Sanchez J.F."/>
            <person name="Wimmers L.E."/>
            <person name="Hearn D.J."/>
            <person name="Abuikhdair F.J."/>
            <person name="Barnhart K.R."/>
            <person name="Duley M.L."/>
            <person name="Ernst S.E.G."/>
            <person name="Kenerson B.A."/>
            <person name="Serafin A.J."/>
            <person name="Hemm M.R."/>
        </authorList>
    </citation>
    <scope>IDENTIFICATION</scope>
    <scope>INDUCTION</scope>
</reference>
<dbReference type="EMBL" id="U00096">
    <property type="protein sequence ID" value="AYC08240.1"/>
    <property type="molecule type" value="Genomic_DNA"/>
</dbReference>
<dbReference type="EnsemblBacteria" id="AYC08240">
    <property type="protein sequence ID" value="AYC08240"/>
    <property type="gene ID" value="b4753"/>
</dbReference>
<dbReference type="InParanoid" id="P0DPP4"/>
<dbReference type="BioCyc" id="EcoCyc:MONOMER0-4431"/>
<dbReference type="PRO" id="PR:P0DPP4"/>
<dbReference type="Proteomes" id="UP000000625">
    <property type="component" value="Chromosome"/>
</dbReference>
<name>YQFH_ECOLI</name>
<proteinExistence type="evidence at protein level"/>
<accession>P0DPP4</accession>
<accession>A0A385XJM0</accession>
<protein>
    <recommendedName>
        <fullName evidence="2">Protein YqfH</fullName>
    </recommendedName>
</protein>
<keyword id="KW-1185">Reference proteome</keyword>
<evidence type="ECO:0000269" key="1">
    <source>
    </source>
</evidence>
<evidence type="ECO:0000303" key="2">
    <source>
    </source>
</evidence>
<organism>
    <name type="scientific">Escherichia coli (strain K12)</name>
    <dbReference type="NCBI Taxonomy" id="83333"/>
    <lineage>
        <taxon>Bacteria</taxon>
        <taxon>Pseudomonadati</taxon>
        <taxon>Pseudomonadota</taxon>
        <taxon>Gammaproteobacteria</taxon>
        <taxon>Enterobacterales</taxon>
        <taxon>Enterobacteriaceae</taxon>
        <taxon>Escherichia</taxon>
    </lineage>
</organism>
<feature type="chain" id="PRO_0000445182" description="Protein YqfH">
    <location>
        <begin position="1"/>
        <end position="23"/>
    </location>
</feature>
<sequence>MINQVSVYRQPPVLSGCRQVKTI</sequence>
<comment type="induction">
    <text evidence="1">Expressed during stationary phase (at protein level).</text>
</comment>
<gene>
    <name evidence="2" type="primary">yqfH</name>
    <name type="ordered locus">b4753</name>
</gene>